<reference key="1">
    <citation type="journal article" date="1980" name="Gene">
        <title>The nucleotide sequence of the transforming early region E1 of adenovirus type 5 DNA.</title>
        <authorList>
            <person name="van Ormondt H."/>
            <person name="Maat J."/>
            <person name="van Beveren C.P."/>
        </authorList>
    </citation>
    <scope>NUCLEOTIDE SEQUENCE [GENOMIC DNA] (ISOFORMS EARLY E1A 32 KDA PROTEIN; EARLY E1A 26 KDA PROTEIN AND EARLY E1A 6 KDA PROTEIN)</scope>
</reference>
<reference key="2">
    <citation type="journal article" date="1992" name="Virology">
        <title>The sequence of the genome of adenovirus type 5 and its comparison with the genome of adenovirus type 2.</title>
        <authorList>
            <person name="Chroboczek J."/>
            <person name="Bieber F."/>
            <person name="Jacrot B."/>
        </authorList>
    </citation>
    <scope>NUCLEOTIDE SEQUENCE [GENOMIC DNA]</scope>
</reference>
<reference key="3">
    <citation type="journal article" date="1988" name="J. Biol. Chem.">
        <title>Identification of the phosphorylation sites in early region 1A proteins of adenovirus type 5 by amino acid sequencing of peptide fragments.</title>
        <authorList>
            <person name="Tremblay M.L."/>
            <person name="McGlade C.J."/>
            <person name="Gerber G.E."/>
            <person name="Branton P.E."/>
        </authorList>
    </citation>
    <scope>PHOSPHORYLATION AT SER-89; SER-219 AND SER-231</scope>
</reference>
<reference key="4">
    <citation type="journal article" date="1991" name="Proc. Natl. Acad. Sci. U.S.A.">
        <title>Conversion of the E1A Cys4 zinc finger to a nonfunctional His2,Cys2 zinc finger by a single point mutation.</title>
        <authorList>
            <person name="Webster L.C."/>
            <person name="Zhang K."/>
            <person name="Chance B."/>
            <person name="Ayene I."/>
            <person name="Culp J.S."/>
            <person name="Huang W.-J."/>
            <person name="Wu F.Y.-H."/>
            <person name="Ricciardi R.P."/>
        </authorList>
    </citation>
    <scope>ZINC-FINGER</scope>
    <scope>MUTAGENESIS OF CYS-154; CYS-157; CYS-171 AND CYS-174</scope>
</reference>
<reference key="5">
    <citation type="journal article" date="1994" name="Proc. Natl. Acad. Sci. U.S.A.">
        <title>The zinc finger region of the adenovirus E1A transactivating domain complexes with the TATA box binding protein.</title>
        <authorList>
            <person name="Geisberg J.V."/>
            <person name="Lee W.S."/>
            <person name="Berk A.J."/>
            <person name="Ricciardi R.P."/>
        </authorList>
    </citation>
    <scope>ZINC-FINGER</scope>
    <scope>INTERACTION WITH HUMAN TBP PROTEIN</scope>
</reference>
<reference key="6">
    <citation type="journal article" date="1995" name="Proc. Natl. Acad. Sci. U.S.A.">
        <title>Molecular cloning and characterization of a cellular phosphoprotein that interacts with a conserved C-terminal domain of adenovirus E1A involved in negative modulation of oncogenic transformation.</title>
        <authorList>
            <person name="Schaeper U."/>
            <person name="Boyd J.M."/>
            <person name="Verma S."/>
            <person name="Uhlmann E."/>
            <person name="Subramanian T."/>
            <person name="Chinnadurai G."/>
        </authorList>
    </citation>
    <scope>INTERACTION WITH HUMAN CTBP1</scope>
</reference>
<reference key="7">
    <citation type="journal article" date="1996" name="J. Biol. Chem.">
        <title>mUBC9, a novel adenovirus E1A-interacting protein that complements a yeast cell cycle defect.</title>
        <authorList>
            <person name="Hateboer G."/>
            <person name="Hijmans E.M."/>
            <person name="Nooij J.B.D."/>
            <person name="Schlenker S."/>
            <person name="Jentsch S."/>
            <person name="Bernards R."/>
        </authorList>
    </citation>
    <scope>INTERACTION WITH HUMAN UBE2I</scope>
    <scope>MUTAGENESIS OF LEU-122</scope>
</reference>
<reference key="8">
    <citation type="journal article" date="1998" name="J. Biol. Chem.">
        <title>Stabilization of p53 by adenovirus E1A occurs through its amino-terminal region by modification of the ubiquitin-proteasome pathway.</title>
        <authorList>
            <person name="Nakajima T."/>
            <person name="Morita K."/>
            <person name="Tsunoda H."/>
            <person name="Imajoh-Ohmi S."/>
            <person name="Tanaka H."/>
            <person name="Yasuda H."/>
            <person name="Oda K."/>
        </authorList>
    </citation>
    <scope>FUNCTION OF ISOFORM EARLY E1A 26 KDA PROTEIN</scope>
</reference>
<reference key="9">
    <citation type="journal article" date="2001" name="Nat. Cell Biol.">
        <title>Acetylation control of the retinoblastoma tumour-suppressor protein.</title>
        <authorList>
            <person name="Chan H.M."/>
            <person name="Krstic-Demonacos M."/>
            <person name="Smith L."/>
            <person name="Demonacos C."/>
            <person name="La Thangue N.B."/>
        </authorList>
    </citation>
    <scope>INTERACTION WITH HUMAN EP300</scope>
</reference>
<reference key="10">
    <citation type="journal article" date="2002" name="J. Biol. Chem.">
        <title>The conserved Mynd domain of BS69 binds cellular and oncoviral proteins through a common PXLXP motif.</title>
        <authorList>
            <person name="Ansieau S."/>
            <person name="Leutz A."/>
        </authorList>
    </citation>
    <scope>INTERACTION WITH HUMAN ZMYND11/BS69</scope>
    <scope>MUTAGENESIS OF LEU-115</scope>
</reference>
<reference key="11">
    <citation type="journal article" date="2002" name="Cancer Cell">
        <title>The RB and p53 pathways in cancer.</title>
        <authorList>
            <person name="Sherr C.J."/>
            <person name="McCormick F."/>
        </authorList>
    </citation>
    <scope>REVIEW ON FUNCTION</scope>
</reference>
<reference key="12">
    <citation type="journal article" date="2005" name="Oncogene">
        <title>Viral oncoproteins E1A and E7 and cellular LxCxE proteins repress SUMO modification of the retinoblastoma tumor suppressor.</title>
        <authorList>
            <person name="Ledl A."/>
            <person name="Schmidt D."/>
            <person name="Muller S."/>
        </authorList>
    </citation>
    <scope>FUNCTION</scope>
</reference>
<reference key="13">
    <citation type="journal article" date="2008" name="Proc. Natl. Acad. Sci. U.S.A.">
        <title>Adenovirus E1A targets p400 to induce the cellular oncoprotein Myc.</title>
        <authorList>
            <person name="Tworkowski K.A."/>
            <person name="Chakraborty A.A."/>
            <person name="Samuelson A.V."/>
            <person name="Seger Y.R."/>
            <person name="Narita M."/>
            <person name="Hannon G.J."/>
            <person name="Lowe S.W."/>
            <person name="Tansey W.P."/>
        </authorList>
    </citation>
    <scope>INTERACTION WITH HUMAN EP400</scope>
</reference>
<reference key="14">
    <citation type="journal article" date="2009" name="J. Biol. Chem.">
        <title>Adenovirus E1A inhibits SCF(Fbw7) ubiquitin ligase.</title>
        <authorList>
            <person name="Isobe T."/>
            <person name="Hattori T."/>
            <person name="Kitagawa K."/>
            <person name="Uchida C."/>
            <person name="Kotake Y."/>
            <person name="Kosugi I."/>
            <person name="Oda T."/>
            <person name="Kitagawa M."/>
        </authorList>
    </citation>
    <scope>FUNCTION</scope>
    <scope>INTERACTION WITH HUMAN RBX1</scope>
    <scope>INTERACTION WITH SCF(FBXW7) COMPLEX</scope>
    <scope>INTERACTION WITH HUMAN CUL1</scope>
</reference>
<reference key="15">
    <citation type="journal article" date="2010" name="Oncogene">
        <title>Identification of a molecular recognition feature in the E1A oncoprotein that binds the SUMO conjugase UBC9 and likely interferes with polySUMOylation.</title>
        <authorList>
            <person name="Yousef A.F."/>
            <person name="Fonseca G.J."/>
            <person name="Pelka P."/>
            <person name="Ablack J.N."/>
            <person name="Walsh C."/>
            <person name="Dick F.A."/>
            <person name="Bazett-Jones D.P."/>
            <person name="Shaw G.S."/>
            <person name="Mymryk J.S."/>
        </authorList>
    </citation>
    <scope>FUNCTION</scope>
    <scope>INTERACTION WITH HOST UBE2I</scope>
</reference>
<reference key="16">
    <citation type="journal article" date="2013" name="Virology">
        <title>Interaction of CtBP with adenovirus E1A suppresses immortalization of primary epithelial cells and enhances virus replication during productive infection.</title>
        <authorList>
            <person name="Subramanian T."/>
            <person name="Zhao L.J."/>
            <person name="Chinnadurai G."/>
        </authorList>
    </citation>
    <scope>INTERACTION WITH HUMAN CTBP1</scope>
    <scope>INTERACTION WITH HUMAN CTBP2</scope>
    <scope>MUTAGENESIS OF 281-ASP-LEU-282</scope>
</reference>
<reference key="17">
    <citation type="journal article" date="2013" name="J. Virol.">
        <title>Dissection of the C-terminal region of E1A redefines the roles of CtBP and other cellular targets in oncogenic transformation.</title>
        <authorList>
            <person name="Cohen M.J."/>
            <person name="Yousef A.F."/>
            <person name="Massimi P."/>
            <person name="Fonseca G.J."/>
            <person name="Todorovic B."/>
            <person name="Pelka P."/>
            <person name="Turnell A.S."/>
            <person name="Banks L."/>
            <person name="Mymryk J.S."/>
        </authorList>
    </citation>
    <scope>INTERACTION WITH HUMAN DCAF7</scope>
    <scope>INTERACTION WITH HUMAN DYRK1A</scope>
    <scope>INTERACTION WITH HUMAN KPNA4</scope>
</reference>
<reference key="18">
    <citation type="journal article" date="2014" name="J. Virol.">
        <title>Adenovirus E1A targets the DREF nuclear factor to regulate virus gene expression, DNA replication, and growth.</title>
        <authorList>
            <person name="Radko S."/>
            <person name="Koleva M."/>
            <person name="James K.M."/>
            <person name="Jung R."/>
            <person name="Mymryk J.S."/>
            <person name="Pelka P."/>
        </authorList>
    </citation>
    <scope>FUNCTION</scope>
    <scope>INTERACTION WITH HUMAN ZBED1</scope>
    <scope>SUBCELLULAR LOCATION</scope>
    <scope>MUTAGENESIS OF THR-123; LYS-253; 262-ARG-ARG-263; GLU-267 AND 272-LYS-LYS-273</scope>
</reference>
<reference key="19">
    <citation type="journal article" date="2015" name="Science">
        <title>DNA tumor virus oncogenes antagonize the cGAS-STING DNA-sensing pathway.</title>
        <authorList>
            <person name="Lau L."/>
            <person name="Gray E.E."/>
            <person name="Brunette R.L."/>
            <person name="Stetson D.B."/>
        </authorList>
    </citation>
    <scope>INTERACTION WITH HUMAN TMEM173</scope>
    <scope>FUNCTION</scope>
    <scope>MUTAGENESIS OF 122-LEU--GLU-126</scope>
</reference>
<reference key="20">
    <citation type="journal article" date="2014" name="Virology">
        <title>Functional analysis of the C-terminal region of human adenovirus E1A reveals a misidentified nuclear localization signal.</title>
        <authorList>
            <person name="Cohen M.J."/>
            <person name="King C.R."/>
            <person name="Dikeakos J.D."/>
            <person name="Mymryk J.S."/>
        </authorList>
    </citation>
    <scope>SUBCELLULAR LOCATION</scope>
    <scope>NUCLEAR LOCALIZATION SIGNAL</scope>
</reference>
<reference key="21">
    <citation type="journal article" date="2007" name="Genes Dev.">
        <title>Structure of the retinoblastoma protein bound to adenovirus E1A reveals the molecular basis for viral oncoprotein inactivation of a tumor suppressor.</title>
        <authorList>
            <person name="Liu X."/>
            <person name="Marmorstein R."/>
        </authorList>
    </citation>
    <scope>X-RAY CRYSTALLOGRAPHY (1.67 ANGSTROMS) OF 40-49 IN COMPLEX WITH HUMAN RB1</scope>
</reference>
<organismHost>
    <name type="scientific">Homo sapiens</name>
    <name type="common">Human</name>
    <dbReference type="NCBI Taxonomy" id="9606"/>
</organismHost>
<organism>
    <name type="scientific">Human adenovirus C serotype 5</name>
    <name type="common">HAdV-5</name>
    <name type="synonym">Human adenovirus 5</name>
    <dbReference type="NCBI Taxonomy" id="28285"/>
    <lineage>
        <taxon>Viruses</taxon>
        <taxon>Varidnaviria</taxon>
        <taxon>Bamfordvirae</taxon>
        <taxon>Preplasmiviricota</taxon>
        <taxon>Tectiliviricetes</taxon>
        <taxon>Rowavirales</taxon>
        <taxon>Adenoviridae</taxon>
        <taxon>Mastadenovirus</taxon>
        <taxon>Human mastadenovirus C</taxon>
    </lineage>
</organism>
<dbReference type="EMBL" id="M73260">
    <property type="status" value="NOT_ANNOTATED_CDS"/>
    <property type="molecule type" value="Genomic_DNA"/>
</dbReference>
<dbReference type="EMBL" id="X02996">
    <property type="protein sequence ID" value="CAB40663.1"/>
    <property type="molecule type" value="Genomic_DNA"/>
</dbReference>
<dbReference type="EMBL" id="X02996">
    <property type="protein sequence ID" value="CAB40664.1"/>
    <property type="molecule type" value="Genomic_DNA"/>
</dbReference>
<dbReference type="EMBL" id="X02996">
    <property type="protein sequence ID" value="CAB40665.1"/>
    <property type="molecule type" value="Genomic_DNA"/>
</dbReference>
<dbReference type="PIR" id="A03825">
    <property type="entry name" value="ERAD65"/>
</dbReference>
<dbReference type="PIR" id="C03824">
    <property type="entry name" value="Q2AD5"/>
</dbReference>
<dbReference type="RefSeq" id="AP_000197.1">
    <molecule id="P03255-1"/>
    <property type="nucleotide sequence ID" value="AC_000008.1"/>
</dbReference>
<dbReference type="PDB" id="2KJE">
    <property type="method" value="NMR"/>
    <property type="chains" value="B=53-91"/>
</dbReference>
<dbReference type="PDB" id="2R7G">
    <property type="method" value="X-ray"/>
    <property type="resolution" value="1.67 A"/>
    <property type="chains" value="B/D/E=40-49"/>
</dbReference>
<dbReference type="PDB" id="6H6D">
    <property type="method" value="X-ray"/>
    <property type="resolution" value="2.40 A"/>
    <property type="chains" value="C/F=234-243"/>
</dbReference>
<dbReference type="PDB" id="6H6H">
    <property type="method" value="X-ray"/>
    <property type="resolution" value="2.40 A"/>
    <property type="chains" value="C/F=234-243"/>
</dbReference>
<dbReference type="PDBsum" id="2KJE"/>
<dbReference type="PDBsum" id="2R7G"/>
<dbReference type="PDBsum" id="6H6D"/>
<dbReference type="PDBsum" id="6H6H"/>
<dbReference type="BMRB" id="P03255"/>
<dbReference type="SMR" id="P03255"/>
<dbReference type="DIP" id="DIP-40736N"/>
<dbReference type="ELM" id="P03255"/>
<dbReference type="IntAct" id="P03255">
    <property type="interactions" value="38"/>
</dbReference>
<dbReference type="MINT" id="P03255"/>
<dbReference type="iPTMnet" id="P03255"/>
<dbReference type="EvolutionaryTrace" id="P03255"/>
<dbReference type="Proteomes" id="UP000004992">
    <property type="component" value="Genome"/>
</dbReference>
<dbReference type="GO" id="GO:0042025">
    <property type="term" value="C:host cell nucleus"/>
    <property type="evidence" value="ECO:0000314"/>
    <property type="project" value="UniProtKB"/>
</dbReference>
<dbReference type="GO" id="GO:0140297">
    <property type="term" value="F:DNA-binding transcription factor binding"/>
    <property type="evidence" value="ECO:0000353"/>
    <property type="project" value="CAFA"/>
</dbReference>
<dbReference type="GO" id="GO:0060090">
    <property type="term" value="F:molecular adaptor activity"/>
    <property type="evidence" value="ECO:0000269"/>
    <property type="project" value="DisProt"/>
</dbReference>
<dbReference type="GO" id="GO:0140313">
    <property type="term" value="F:molecular sequestering activity"/>
    <property type="evidence" value="ECO:0000269"/>
    <property type="project" value="DisProt"/>
</dbReference>
<dbReference type="GO" id="GO:0008270">
    <property type="term" value="F:zinc ion binding"/>
    <property type="evidence" value="ECO:0007669"/>
    <property type="project" value="UniProtKB-KW"/>
</dbReference>
<dbReference type="GO" id="GO:0008284">
    <property type="term" value="P:positive regulation of cell population proliferation"/>
    <property type="evidence" value="ECO:0000314"/>
    <property type="project" value="BHF-UCL"/>
</dbReference>
<dbReference type="GO" id="GO:0033235">
    <property type="term" value="P:positive regulation of protein sumoylation"/>
    <property type="evidence" value="ECO:0000314"/>
    <property type="project" value="UniProtKB"/>
</dbReference>
<dbReference type="GO" id="GO:0046719">
    <property type="term" value="P:regulation by virus of viral protein levels in host cell"/>
    <property type="evidence" value="ECO:0000314"/>
    <property type="project" value="UniProtKB"/>
</dbReference>
<dbReference type="GO" id="GO:0006355">
    <property type="term" value="P:regulation of DNA-templated transcription"/>
    <property type="evidence" value="ECO:0007669"/>
    <property type="project" value="InterPro"/>
</dbReference>
<dbReference type="GO" id="GO:0032880">
    <property type="term" value="P:regulation of protein localization"/>
    <property type="evidence" value="ECO:0000314"/>
    <property type="project" value="UniProtKB"/>
</dbReference>
<dbReference type="GO" id="GO:0039645">
    <property type="term" value="P:symbiont-mediated perturbation of host cell cycle G1/S transition checkpoint"/>
    <property type="evidence" value="ECO:0007669"/>
    <property type="project" value="UniProtKB-KW"/>
</dbReference>
<dbReference type="GO" id="GO:0039648">
    <property type="term" value="P:symbiont-mediated perturbation of host ubiquitin-like protein modification"/>
    <property type="evidence" value="ECO:0007669"/>
    <property type="project" value="UniProtKB-KW"/>
</dbReference>
<dbReference type="GO" id="GO:0039657">
    <property type="term" value="P:symbiont-mediated suppression of host gene expression"/>
    <property type="evidence" value="ECO:0007669"/>
    <property type="project" value="UniProtKB-KW"/>
</dbReference>
<dbReference type="GO" id="GO:0052170">
    <property type="term" value="P:symbiont-mediated suppression of host innate immune response"/>
    <property type="evidence" value="ECO:0007669"/>
    <property type="project" value="UniProtKB-KW"/>
</dbReference>
<dbReference type="GO" id="GO:0039563">
    <property type="term" value="P:symbiont-mediated suppression of host JAK-STAT cascade via inhibition of STAT1 activity"/>
    <property type="evidence" value="ECO:0007669"/>
    <property type="project" value="UniProtKB-KW"/>
</dbReference>
<dbReference type="GO" id="GO:0039502">
    <property type="term" value="P:symbiont-mediated suppression of host type I interferon-mediated signaling pathway"/>
    <property type="evidence" value="ECO:0007669"/>
    <property type="project" value="UniProtKB-KW"/>
</dbReference>
<dbReference type="DisProt" id="DP01150"/>
<dbReference type="IDEAL" id="IID90003"/>
<dbReference type="InterPro" id="IPR014410">
    <property type="entry name" value="Aden_E1A"/>
</dbReference>
<dbReference type="Pfam" id="PF02703">
    <property type="entry name" value="Adeno_E1A"/>
    <property type="match status" value="3"/>
</dbReference>
<dbReference type="PIRSF" id="PIRSF003669">
    <property type="entry name" value="Aden_E1A"/>
    <property type="match status" value="1"/>
</dbReference>
<accession>P03255</accession>
<accession>P06438</accession>
<accession>Q64825</accession>
<accession>Q64826</accession>
<evidence type="ECO:0000250" key="1">
    <source>
        <dbReference type="UniProtKB" id="P03254"/>
    </source>
</evidence>
<evidence type="ECO:0000255" key="2"/>
<evidence type="ECO:0000256" key="3">
    <source>
        <dbReference type="SAM" id="MobiDB-lite"/>
    </source>
</evidence>
<evidence type="ECO:0000269" key="4">
    <source>
    </source>
</evidence>
<evidence type="ECO:0000269" key="5">
    <source>
    </source>
</evidence>
<evidence type="ECO:0000269" key="6">
    <source>
    </source>
</evidence>
<evidence type="ECO:0000269" key="7">
    <source>
    </source>
</evidence>
<evidence type="ECO:0000269" key="8">
    <source>
    </source>
</evidence>
<evidence type="ECO:0000269" key="9">
    <source>
    </source>
</evidence>
<evidence type="ECO:0000269" key="10">
    <source>
    </source>
</evidence>
<evidence type="ECO:0000269" key="11">
    <source>
    </source>
</evidence>
<evidence type="ECO:0000269" key="12">
    <source>
    </source>
</evidence>
<evidence type="ECO:0000269" key="13">
    <source>
    </source>
</evidence>
<evidence type="ECO:0000269" key="14">
    <source>
    </source>
</evidence>
<evidence type="ECO:0000269" key="15">
    <source>
    </source>
</evidence>
<evidence type="ECO:0000269" key="16">
    <source>
    </source>
</evidence>
<evidence type="ECO:0000269" key="17">
    <source>
    </source>
</evidence>
<evidence type="ECO:0000269" key="18">
    <source>
    </source>
</evidence>
<evidence type="ECO:0000269" key="19">
    <source>
    </source>
</evidence>
<evidence type="ECO:0000269" key="20">
    <source>
    </source>
</evidence>
<evidence type="ECO:0000269" key="21">
    <source>
    </source>
</evidence>
<evidence type="ECO:0000303" key="22">
    <source>
    </source>
</evidence>
<evidence type="ECO:0000305" key="23"/>
<evidence type="ECO:0007829" key="24">
    <source>
        <dbReference type="PDB" id="2KJE"/>
    </source>
</evidence>
<evidence type="ECO:0007829" key="25">
    <source>
        <dbReference type="PDB" id="2R7G"/>
    </source>
</evidence>
<name>E1A_ADE05</name>
<protein>
    <recommendedName>
        <fullName>Early E1A protein</fullName>
    </recommendedName>
    <alternativeName>
        <fullName>Early E1A 32 kDa protein</fullName>
    </alternativeName>
</protein>
<feature type="chain" id="PRO_0000221694" description="Early E1A protein">
    <location>
        <begin position="1"/>
        <end position="289"/>
    </location>
</feature>
<feature type="zinc finger region" evidence="8 19">
    <location>
        <begin position="154"/>
        <end position="174"/>
    </location>
</feature>
<feature type="region of interest" description="Interaction with RB1 in competition with E2F1" evidence="23">
    <location>
        <begin position="41"/>
        <end position="49"/>
    </location>
</feature>
<feature type="region of interest" description="Interaction with UBE2I">
    <location>
        <begin position="76"/>
        <end position="140"/>
    </location>
</feature>
<feature type="region of interest" description="Disordered" evidence="3">
    <location>
        <begin position="82"/>
        <end position="107"/>
    </location>
</feature>
<feature type="region of interest" description="Disordered" evidence="3">
    <location>
        <begin position="186"/>
        <end position="240"/>
    </location>
</feature>
<feature type="short sequence motif" description="PXLXP motif, interaction with host ZMYND11">
    <location>
        <begin position="113"/>
        <end position="117"/>
    </location>
</feature>
<feature type="short sequence motif" description="LXCXE motif, interaction with host RB1 and TMEM173/STING" evidence="2 16">
    <location>
        <begin position="122"/>
        <end position="126"/>
    </location>
</feature>
<feature type="short sequence motif" description="Bipartite nuclear localization signal" evidence="2 14">
    <location>
        <begin position="258"/>
        <end position="289"/>
    </location>
</feature>
<feature type="short sequence motif" description="PXDLS motif, CTBP-binding" evidence="18">
    <location>
        <begin position="279"/>
        <end position="283"/>
    </location>
</feature>
<feature type="compositionally biased region" description="Pro residues" evidence="3">
    <location>
        <begin position="84"/>
        <end position="93"/>
    </location>
</feature>
<feature type="compositionally biased region" description="Polar residues" evidence="3">
    <location>
        <begin position="219"/>
        <end position="237"/>
    </location>
</feature>
<feature type="modified residue" description="Phosphoserine; by host" evidence="17">
    <location>
        <position position="89"/>
    </location>
</feature>
<feature type="modified residue" description="Phosphoserine; by host" evidence="17">
    <location>
        <position position="219"/>
    </location>
</feature>
<feature type="modified residue" description="Phosphoserine; by host" evidence="17">
    <location>
        <position position="231"/>
    </location>
</feature>
<feature type="splice variant" id="VSP_028918" description="In isoform early E1A 6 kDa protein." evidence="23">
    <original>ADNLPPPSHFEPPTLHELYDLDVTAPE</original>
    <variation>CLNLSLSPSQNRSLQDLPAVLKWRLLS</variation>
    <location>
        <begin position="29"/>
        <end position="55"/>
    </location>
</feature>
<feature type="splice variant" id="VSP_028919" description="In isoform early E1A 6 kDa protein." evidence="23">
    <location>
        <begin position="56"/>
        <end position="289"/>
    </location>
</feature>
<feature type="splice variant" id="VSP_000198" description="In isoform early E1A 26 kDa protein." evidence="23">
    <location>
        <begin position="140"/>
        <end position="185"/>
    </location>
</feature>
<feature type="mutagenesis site" description="Complete loss of interaction with host ZMYND11." evidence="5">
    <original>L</original>
    <variation>A</variation>
    <location>
        <position position="115"/>
    </location>
</feature>
<feature type="mutagenesis site" description="Abolishes interaction with host TMEM173/STING." evidence="16">
    <original>LTCHE</original>
    <variation>VTSHD</variation>
    <location>
        <begin position="122"/>
        <end position="126"/>
    </location>
</feature>
<feature type="mutagenesis site" description="Abolishes binding to UBE2I." evidence="20">
    <original>L</original>
    <variation>I</variation>
    <location>
        <position position="122"/>
    </location>
</feature>
<feature type="mutagenesis site" description="Abolishes increased sumoylation of human ZBED1." evidence="15">
    <original>T</original>
    <variation>H</variation>
    <location>
        <position position="123"/>
    </location>
</feature>
<feature type="mutagenesis site" description="Loss of transactivation." evidence="8">
    <original>C</original>
    <variation>S</variation>
    <location>
        <position position="154"/>
    </location>
</feature>
<feature type="mutagenesis site" description="Loss of transactivation." evidence="8">
    <original>C</original>
    <variation>S</variation>
    <location>
        <position position="157"/>
    </location>
</feature>
<feature type="mutagenesis site" description="Loss of transactivation." evidence="8">
    <original>C</original>
    <variation>S</variation>
    <location>
        <position position="171"/>
    </location>
</feature>
<feature type="mutagenesis site" description="Loss of transactivation." evidence="8">
    <original>C</original>
    <variation>S</variation>
    <location>
        <position position="174"/>
    </location>
</feature>
<feature type="mutagenesis site" description="Reduces interaction with human ZBED1." evidence="15">
    <original>K</original>
    <variation>E</variation>
    <location>
        <position position="253"/>
    </location>
</feature>
<feature type="mutagenesis site" description="Reduces interaction with human ZBED1." evidence="15">
    <original>RR</original>
    <variation>EE</variation>
    <location>
        <begin position="262"/>
        <end position="263"/>
    </location>
</feature>
<feature type="mutagenesis site" description="Reduces interaction with human ZBED1." evidence="15">
    <original>E</original>
    <variation>K</variation>
    <location>
        <position position="267"/>
    </location>
</feature>
<feature type="mutagenesis site" description="Abolishes interaction with human ZBED1. Abolishes E1A-mediated increased sumoylation of ZBED1. Abolishes localization of ZBED1 to peripheral areas of PML bodies." evidence="15">
    <original>LL</original>
    <variation>AA</variation>
    <location>
        <begin position="272"/>
        <end position="273"/>
    </location>
</feature>
<feature type="mutagenesis site" description="30% decrease in virus replication efficiency. Enhanced immortalization and Ras cooperative transformation." evidence="12">
    <original>DL</original>
    <variation>AS</variation>
    <location>
        <begin position="281"/>
        <end position="282"/>
    </location>
</feature>
<feature type="helix" evidence="25">
    <location>
        <begin position="43"/>
        <end position="46"/>
    </location>
</feature>
<feature type="helix" evidence="24">
    <location>
        <begin position="59"/>
        <end position="63"/>
    </location>
</feature>
<feature type="strand" evidence="24">
    <location>
        <begin position="68"/>
        <end position="70"/>
    </location>
</feature>
<feature type="helix" evidence="24">
    <location>
        <begin position="72"/>
        <end position="74"/>
    </location>
</feature>
<feature type="helix" evidence="24">
    <location>
        <begin position="80"/>
        <end position="82"/>
    </location>
</feature>
<proteinExistence type="evidence at protein level"/>
<sequence length="289" mass="31851">MRHIICHGGVITEEMAASLLDQLIEEVLADNLPPPSHFEPPTLHELYDLDVTAPEDPNEEAVSQIFPDSVMLAVQEGIDLLTFPPAPGSPEPPHLSRQPEQPEQRALGPVSMPNLVPEVIDLTCHEAGFPPSDDEDEEGEEFVLDYVEHPGHGCRSCHYHRRNTGDPDIMCSLCYMRTCGMFVYSPVSEPEPEPEPEPEPARPTRRPKMAPAILRRPTSPVSRECNSSTDSCDSGPSNTPPEIHPVVPLCPIKPVAVRVGGRRQAVECIEDLLNEPGQPLDLSCKRPRP</sequence>
<comment type="function">
    <text evidence="6 10 11 15 16 21 22">Plays a role in viral genome replication by driving entry of quiescent cells into the cell cycle. Stimulation of progression from G1 to S phase allows the virus to efficiently use the cellular DNA replicating machinery to achieve viral genome replication. E1A protein has both transforming and trans-activating activities. Induces the disassembly of the E2F1 transcription factor from RB1 by direct competition for the same binding site on RB1, with subsequent transcriptional activation of E2F1-regulated S-phase genes and of the E2 region of the adenoviral genome. Release of E2F1 leads to the ARF-mediated inhibition of MDM2 and causes TP53/p53 to accumulate because it is not targeted for degradation by MDM2-mediated ubiquitination anymore. This increase in TP53, in turn, would arrest the cell proliferation and direct its death but this effect is counteracted by the viral protein E1B-55K. Inactivation of the ability of RB1 to arrest the cell cycle is critical for cellular transformation, uncontrolled cellular growth and proliferation induced by viral infection. Interaction with RBX1 and CUL1 inhibits ubiquitination of the proteins targeted by SCF(FBXW7) ubiquitin ligase complex, and may be linked to unregulated host cell proliferation. The tumorigenesis-restraining activity of E1A may be related to the disruption of the host CtBP-CtIP complex through the CtBP binding motif. Interaction with host TMEM173/STING impairs the ability of TMEM173/STING to sense cytosolic DNA and promote the production of type I interferon (IFN-alpha and IFN-beta) (PubMed:26405230). Promotes the sumoylation of host ZBED1/hDREF with SUMO1 (PubMed:25210186).</text>
</comment>
<comment type="subunit">
    <text evidence="1 4 5 7 9 10 11 12 13 15 16 18 19 20 23">Interacts with host UBE2I; this interaction interferes with polySUMOylation (Probable) (PubMed:20543865, PubMed:8824223). Interacts with host RB1; this interaction induces the aberrant dissociation of RB1-E2F1 complex thereby disrupting the activity of RB1 and activating E2F1-regulated genes (PubMed:17974914). Interacts with host ATF7; the interaction enhances ATF7-mediated viral transactivation activity which requires the zinc binding domains of both proteins (By similarity). Isoform early E1A 32 kDa protein and isoform early E1A 26 kDa protein interact (via N-terminus) with CUL1 and E3 ubiquitin ligase RBX1; these interactions inhibit RBX1-CUL1-dependent elongation reaction of ubiquitin chains and attenuate ubiquitination of SCF(FBXW7) target proteins (PubMed:19679664). Interacts (via PXLXP motif) with host ZMYND11/BS69 (via MYND-type zinc finger); this interaction inhibits E1A mediated transactivation (PubMed:11733528). Interacts with host EP300; this interaction stimulates the acetylation of RB1 by recruiting EP300 and RB1 into a multimeric-protein complex (PubMed:11433299). Interacts with host CTBP1 and CTBP2; this interaction seems to potentiate viral replication (PubMed:23747199, PubMed:7479821). Interacts with host DCAF7 (ref.16). Interacts with host DYRK1A (PubMed:23864635). Interacts with host KPNA4; this interaction allows E1A import into the host nucleus (PubMed:23864635). Interacts with host EP400; this interaction stabilizes MYC (PubMed:18413597). Interacts with host TBP protein; this interaction probably disrupts the TBP-TATA complex (PubMed:8146144). Interacts (via LXCXE motif) with host TMEM173/STING; this interaction impairs the ability of TMEM173/STING to sense cytosolic DNA and promote the production of type I interferon (IFN-alpha and IFN-beta) (PubMed:26405230). Interacts (via C-terminus) with host ZBED1/hDREF (via C-terminus); the interaction is direct (PubMed:25210186).</text>
</comment>
<comment type="interaction">
    <interactant intactId="EBI-2603114">
        <id>P03255</id>
    </interactant>
    <interactant intactId="EBI-7796656">
        <id>O08769</id>
        <label>Cdkn1b</label>
    </interactant>
    <organismsDiffer>true</organismsDiffer>
    <experiments>2</experiments>
</comment>
<comment type="interaction">
    <interactant intactId="EBI-2603114">
        <id>P03255</id>
    </interactant>
    <interactant intactId="EBI-296306">
        <id>P45481</id>
        <label>Crebbp</label>
    </interactant>
    <organismsDiffer>true</organismsDiffer>
    <experiments>2</experiments>
</comment>
<comment type="interaction">
    <interactant intactId="EBI-2603114">
        <id>P03255</id>
    </interactant>
    <interactant intactId="EBI-81215">
        <id>Q92793</id>
        <label>CREBBP</label>
    </interactant>
    <organismsDiffer>true</organismsDiffer>
    <experiments>3</experiments>
</comment>
<comment type="interaction">
    <interactant intactId="EBI-2603114">
        <id>P03255</id>
    </interactant>
    <interactant intactId="EBI-447295">
        <id>Q09472</id>
        <label>EP300</label>
    </interactant>
    <organismsDiffer>true</organismsDiffer>
    <experiments>3</experiments>
</comment>
<comment type="interaction">
    <interactant intactId="EBI-2603114">
        <id>P03255</id>
    </interactant>
    <interactant intactId="EBI-477430">
        <id>Q92831</id>
        <label>KAT2B</label>
    </interactant>
    <organismsDiffer>true</organismsDiffer>
    <experiments>3</experiments>
</comment>
<comment type="interaction">
    <interactant intactId="EBI-2603114">
        <id>P03255</id>
    </interactant>
    <interactant intactId="EBI-514199">
        <id>Q9H204</id>
        <label>MED28</label>
    </interactant>
    <organismsDiffer>true</organismsDiffer>
    <experiments>2</experiments>
</comment>
<comment type="interaction">
    <interactant intactId="EBI-2603114">
        <id>P03255</id>
    </interactant>
    <interactant intactId="EBI-8583223">
        <id>P10826-2</id>
        <label>RARB</label>
    </interactant>
    <organismsDiffer>true</organismsDiffer>
    <experiments>2</experiments>
</comment>
<comment type="interaction">
    <interactant intactId="EBI-2603114">
        <id>P03255</id>
    </interactant>
    <interactant intactId="EBI-491274">
        <id>P06400</id>
        <label>RB1</label>
    </interactant>
    <organismsDiffer>true</organismsDiffer>
    <experiments>10</experiments>
</comment>
<comment type="interaction">
    <interactant intactId="EBI-2603114">
        <id>P03255</id>
    </interactant>
    <interactant intactId="EBI-971402">
        <id>P28749</id>
        <label>RBL1</label>
    </interactant>
    <organismsDiffer>true</organismsDiffer>
    <experiments>3</experiments>
</comment>
<comment type="interaction">
    <interactant intactId="EBI-2603114">
        <id>P03255</id>
    </interactant>
    <interactant intactId="EBI-971439">
        <id>Q08999</id>
        <label>RBL2</label>
    </interactant>
    <organismsDiffer>true</organismsDiffer>
    <experiments>2</experiments>
</comment>
<comment type="interaction">
    <interactant intactId="EBI-2603114">
        <id>P03255</id>
    </interactant>
    <interactant intactId="EBI-2800345">
        <id>Q86WV6</id>
        <label>STING1</label>
    </interactant>
    <organismsDiffer>true</organismsDiffer>
    <experiments>2</experiments>
</comment>
<comment type="interaction">
    <interactant intactId="EBI-2603114">
        <id>P03255</id>
    </interactant>
    <interactant intactId="EBI-491289">
        <id>P21675</id>
        <label>TAF1</label>
    </interactant>
    <organismsDiffer>true</organismsDiffer>
    <experiments>3</experiments>
</comment>
<comment type="interaction">
    <interactant intactId="EBI-2603114">
        <id>P03255</id>
    </interactant>
    <interactant intactId="EBI-277958">
        <id>P47825</id>
        <label>Taf4</label>
    </interactant>
    <organismsDiffer>true</organismsDiffer>
    <experiments>3</experiments>
</comment>
<comment type="interaction">
    <interactant intactId="EBI-2603114">
        <id>P03255</id>
    </interactant>
    <interactant intactId="EBI-2623509">
        <id>Q15326</id>
        <label>ZMYND11</label>
    </interactant>
    <organismsDiffer>true</organismsDiffer>
    <experiments>3</experiments>
</comment>
<comment type="interaction">
    <interactant intactId="EBI-6692439">
        <id>P03255-1</id>
    </interactant>
    <interactant intactId="EBI-359720">
        <id>P17980</id>
        <label>PSMC3</label>
    </interactant>
    <organismsDiffer>true</organismsDiffer>
    <experiments>2</experiments>
</comment>
<comment type="interaction">
    <interactant intactId="EBI-6692439">
        <id>P03255-1</id>
    </interactant>
    <interactant intactId="EBI-357745">
        <id>P62195</id>
        <label>PSMC5</label>
    </interactant>
    <organismsDiffer>true</organismsDiffer>
    <experiments>2</experiments>
</comment>
<comment type="interaction">
    <interactant intactId="EBI-6692439">
        <id>P03255-1</id>
    </interactant>
    <interactant intactId="EBI-491274">
        <id>P06400</id>
        <label>RB1</label>
    </interactant>
    <organismsDiffer>true</organismsDiffer>
    <experiments>2</experiments>
</comment>
<comment type="interaction">
    <interactant intactId="EBI-6692439">
        <id>P03255-1</id>
    </interactant>
    <interactant intactId="EBI-1057697">
        <id>P42224</id>
        <label>STAT1</label>
    </interactant>
    <organismsDiffer>true</organismsDiffer>
    <experiments>2</experiments>
</comment>
<comment type="interaction">
    <interactant intactId="EBI-6859460">
        <id>P03255-2</id>
    </interactant>
    <interactant intactId="EBI-447295">
        <id>Q09472</id>
        <label>EP300</label>
    </interactant>
    <organismsDiffer>true</organismsDiffer>
    <experiments>3</experiments>
</comment>
<comment type="interaction">
    <interactant intactId="EBI-6859460">
        <id>P03255-2</id>
    </interactant>
    <interactant intactId="EBI-477430">
        <id>Q92831</id>
        <label>KAT2B</label>
    </interactant>
    <organismsDiffer>true</organismsDiffer>
    <experiments>3</experiments>
</comment>
<comment type="interaction">
    <interactant intactId="EBI-6859460">
        <id>P03255-2</id>
    </interactant>
    <interactant intactId="EBI-398437">
        <id>O15151</id>
        <label>MDM4</label>
    </interactant>
    <organismsDiffer>true</organismsDiffer>
    <experiments>3</experiments>
</comment>
<comment type="interaction">
    <interactant intactId="EBI-6859460">
        <id>P03255-2</id>
    </interactant>
    <interactant intactId="EBI-491274">
        <id>P06400</id>
        <label>RB1</label>
    </interactant>
    <organismsDiffer>true</organismsDiffer>
    <experiments>3</experiments>
</comment>
<comment type="interaction">
    <interactant intactId="EBI-6859460">
        <id>P03255-2</id>
    </interactant>
    <interactant intactId="EBI-1057697">
        <id>P42224</id>
        <label>STAT1</label>
    </interactant>
    <organismsDiffer>true</organismsDiffer>
    <experiments>2</experiments>
</comment>
<comment type="subcellular location">
    <subcellularLocation>
        <location evidence="14 15">Host nucleus</location>
    </subcellularLocation>
</comment>
<comment type="alternative products">
    <event type="alternative splicing"/>
    <isoform>
        <id>P03255-1</id>
        <name>early E1A 32 kDa protein</name>
        <name>289R</name>
        <name>L-E1A</name>
        <sequence type="displayed"/>
    </isoform>
    <isoform>
        <id>P03255-2</id>
        <name>early E1A 26 kDa protein</name>
        <name>243R</name>
        <name>S-E1A</name>
        <sequence type="described" ref="VSP_000198"/>
    </isoform>
    <isoform>
        <id>P03255-3</id>
        <name>early E1A 6 kDa protein</name>
        <sequence type="described" ref="VSP_028918 VSP_028919"/>
    </isoform>
    <text>Isoforms are derived from the E1 region of the genome.</text>
</comment>
<comment type="similarity">
    <text evidence="23">Belongs to the adenoviridae E1A protein family.</text>
</comment>
<keyword id="KW-0002">3D-structure</keyword>
<keyword id="KW-0010">Activator</keyword>
<keyword id="KW-0025">Alternative splicing</keyword>
<keyword id="KW-0244">Early protein</keyword>
<keyword id="KW-1262">Eukaryotic host gene expression shutoff by virus</keyword>
<keyword id="KW-1191">Eukaryotic host transcription shutoff by virus</keyword>
<keyword id="KW-1078">G1/S host cell cycle checkpoint dysregulation by virus</keyword>
<keyword id="KW-1190">Host gene expression shutoff by virus</keyword>
<keyword id="KW-1048">Host nucleus</keyword>
<keyword id="KW-0945">Host-virus interaction</keyword>
<keyword id="KW-1111">Inhibition of eukaryotic host transcription initiation by virus</keyword>
<keyword id="KW-1090">Inhibition of host innate immune response by virus</keyword>
<keyword id="KW-1114">Inhibition of host interferon signaling pathway by virus</keyword>
<keyword id="KW-1105">Inhibition of host STAT1 by virus</keyword>
<keyword id="KW-0922">Interferon antiviral system evasion</keyword>
<keyword id="KW-0479">Metal-binding</keyword>
<keyword id="KW-1121">Modulation of host cell cycle by virus</keyword>
<keyword id="KW-1123">Modulation of host E3 ubiquitin ligases by virus</keyword>
<keyword id="KW-1130">Modulation of host ubiquitin pathway by virus</keyword>
<keyword id="KW-0553">Oncogene</keyword>
<keyword id="KW-0597">Phosphoprotein</keyword>
<keyword id="KW-1185">Reference proteome</keyword>
<keyword id="KW-0804">Transcription</keyword>
<keyword id="KW-0805">Transcription regulation</keyword>
<keyword id="KW-0899">Viral immunoevasion</keyword>
<keyword id="KW-0862">Zinc</keyword>
<keyword id="KW-0863">Zinc-finger</keyword>